<reference key="1">
    <citation type="journal article" date="2000" name="Nature">
        <title>Sequence and analysis of chromosome 1 of the plant Arabidopsis thaliana.</title>
        <authorList>
            <person name="Theologis A."/>
            <person name="Ecker J.R."/>
            <person name="Palm C.J."/>
            <person name="Federspiel N.A."/>
            <person name="Kaul S."/>
            <person name="White O."/>
            <person name="Alonso J."/>
            <person name="Altafi H."/>
            <person name="Araujo R."/>
            <person name="Bowman C.L."/>
            <person name="Brooks S.Y."/>
            <person name="Buehler E."/>
            <person name="Chan A."/>
            <person name="Chao Q."/>
            <person name="Chen H."/>
            <person name="Cheuk R.F."/>
            <person name="Chin C.W."/>
            <person name="Chung M.K."/>
            <person name="Conn L."/>
            <person name="Conway A.B."/>
            <person name="Conway A.R."/>
            <person name="Creasy T.H."/>
            <person name="Dewar K."/>
            <person name="Dunn P."/>
            <person name="Etgu P."/>
            <person name="Feldblyum T.V."/>
            <person name="Feng J.-D."/>
            <person name="Fong B."/>
            <person name="Fujii C.Y."/>
            <person name="Gill J.E."/>
            <person name="Goldsmith A.D."/>
            <person name="Haas B."/>
            <person name="Hansen N.F."/>
            <person name="Hughes B."/>
            <person name="Huizar L."/>
            <person name="Hunter J.L."/>
            <person name="Jenkins J."/>
            <person name="Johnson-Hopson C."/>
            <person name="Khan S."/>
            <person name="Khaykin E."/>
            <person name="Kim C.J."/>
            <person name="Koo H.L."/>
            <person name="Kremenetskaia I."/>
            <person name="Kurtz D.B."/>
            <person name="Kwan A."/>
            <person name="Lam B."/>
            <person name="Langin-Hooper S."/>
            <person name="Lee A."/>
            <person name="Lee J.M."/>
            <person name="Lenz C.A."/>
            <person name="Li J.H."/>
            <person name="Li Y.-P."/>
            <person name="Lin X."/>
            <person name="Liu S.X."/>
            <person name="Liu Z.A."/>
            <person name="Luros J.S."/>
            <person name="Maiti R."/>
            <person name="Marziali A."/>
            <person name="Militscher J."/>
            <person name="Miranda M."/>
            <person name="Nguyen M."/>
            <person name="Nierman W.C."/>
            <person name="Osborne B.I."/>
            <person name="Pai G."/>
            <person name="Peterson J."/>
            <person name="Pham P.K."/>
            <person name="Rizzo M."/>
            <person name="Rooney T."/>
            <person name="Rowley D."/>
            <person name="Sakano H."/>
            <person name="Salzberg S.L."/>
            <person name="Schwartz J.R."/>
            <person name="Shinn P."/>
            <person name="Southwick A.M."/>
            <person name="Sun H."/>
            <person name="Tallon L.J."/>
            <person name="Tambunga G."/>
            <person name="Toriumi M.J."/>
            <person name="Town C.D."/>
            <person name="Utterback T."/>
            <person name="Van Aken S."/>
            <person name="Vaysberg M."/>
            <person name="Vysotskaia V.S."/>
            <person name="Walker M."/>
            <person name="Wu D."/>
            <person name="Yu G."/>
            <person name="Fraser C.M."/>
            <person name="Venter J.C."/>
            <person name="Davis R.W."/>
        </authorList>
    </citation>
    <scope>NUCLEOTIDE SEQUENCE [LARGE SCALE GENOMIC DNA]</scope>
    <source>
        <strain>cv. Columbia</strain>
    </source>
</reference>
<reference key="2">
    <citation type="journal article" date="2017" name="Plant J.">
        <title>Araport11: a complete reannotation of the Arabidopsis thaliana reference genome.</title>
        <authorList>
            <person name="Cheng C.Y."/>
            <person name="Krishnakumar V."/>
            <person name="Chan A.P."/>
            <person name="Thibaud-Nissen F."/>
            <person name="Schobel S."/>
            <person name="Town C.D."/>
        </authorList>
    </citation>
    <scope>GENOME REANNOTATION</scope>
    <source>
        <strain>cv. Columbia</strain>
    </source>
</reference>
<reference key="3">
    <citation type="submission" date="1999-10" db="EMBL/GenBank/DDBJ databases">
        <title>A novel multigene family in Arabidopsis thaliana coding for putative sugar transporters.</title>
        <authorList>
            <person name="Gy I."/>
            <person name="Kreis M."/>
            <person name="Lecharny A."/>
        </authorList>
    </citation>
    <scope>NUCLEOTIDE SEQUENCE [MRNA] OF 64-307</scope>
</reference>
<reference key="4">
    <citation type="journal article" date="2006" name="BMC Evol. Biol.">
        <title>The monosaccharide transporter gene family in land plants is ancient and shows differential subfamily expression and expansion across lineages.</title>
        <authorList>
            <person name="Johnson D.A."/>
            <person name="Hill J.P."/>
            <person name="Thomas M.A."/>
        </authorList>
    </citation>
    <scope>GENE FAMILY</scope>
</reference>
<proteinExistence type="evidence at transcript level"/>
<keyword id="KW-0472">Membrane</keyword>
<keyword id="KW-1185">Reference proteome</keyword>
<keyword id="KW-0762">Sugar transport</keyword>
<keyword id="KW-0812">Transmembrane</keyword>
<keyword id="KW-1133">Transmembrane helix</keyword>
<keyword id="KW-0813">Transport</keyword>
<gene>
    <name type="primary">SUGTL4</name>
    <name type="ordered locus">At1g08890</name>
    <name type="ORF">F7G19.23</name>
</gene>
<evidence type="ECO:0000250" key="1"/>
<evidence type="ECO:0000255" key="2"/>
<evidence type="ECO:0000305" key="3"/>
<comment type="function">
    <text evidence="3">Sugar transporter.</text>
</comment>
<comment type="subcellular location">
    <subcellularLocation>
        <location evidence="1">Membrane</location>
        <topology evidence="1">Multi-pass membrane protein</topology>
    </subcellularLocation>
</comment>
<comment type="similarity">
    <text evidence="3">Belongs to the major facilitator superfamily. Sugar transporter (TC 2.A.1.1) family.</text>
</comment>
<comment type="sequence caution" evidence="3">
    <conflict type="erroneous gene model prediction">
        <sequence resource="EMBL-CDS" id="AAB70415"/>
    </conflict>
</comment>
<accession>Q9SCW7</accession>
<accession>O04041</accession>
<name>ERDL1_ARATH</name>
<dbReference type="EMBL" id="AC000106">
    <property type="protein sequence ID" value="AAB70415.1"/>
    <property type="status" value="ALT_SEQ"/>
    <property type="molecule type" value="Genomic_DNA"/>
</dbReference>
<dbReference type="EMBL" id="CP002684">
    <property type="protein sequence ID" value="AEE28362.1"/>
    <property type="molecule type" value="Genomic_DNA"/>
</dbReference>
<dbReference type="EMBL" id="AJ249970">
    <property type="protein sequence ID" value="CAB64735.1"/>
    <property type="molecule type" value="mRNA"/>
</dbReference>
<dbReference type="PIR" id="F86220">
    <property type="entry name" value="F86220"/>
</dbReference>
<dbReference type="RefSeq" id="NP_172364.3">
    <property type="nucleotide sequence ID" value="NM_100761.4"/>
</dbReference>
<dbReference type="SMR" id="Q9SCW7"/>
<dbReference type="BioGRID" id="22651">
    <property type="interactions" value="23"/>
</dbReference>
<dbReference type="FunCoup" id="Q9SCW7">
    <property type="interactions" value="691"/>
</dbReference>
<dbReference type="IntAct" id="Q9SCW7">
    <property type="interactions" value="23"/>
</dbReference>
<dbReference type="STRING" id="3702.Q9SCW7"/>
<dbReference type="PaxDb" id="3702-AT1G08890.1"/>
<dbReference type="ProteomicsDB" id="220779"/>
<dbReference type="EnsemblPlants" id="AT1G08890.1">
    <property type="protein sequence ID" value="AT1G08890.1"/>
    <property type="gene ID" value="AT1G08890"/>
</dbReference>
<dbReference type="GeneID" id="837410"/>
<dbReference type="Gramene" id="AT1G08890.1">
    <property type="protein sequence ID" value="AT1G08890.1"/>
    <property type="gene ID" value="AT1G08890"/>
</dbReference>
<dbReference type="KEGG" id="ath:AT1G08890"/>
<dbReference type="Araport" id="AT1G08890"/>
<dbReference type="TAIR" id="AT1G08890"/>
<dbReference type="eggNOG" id="KOG0254">
    <property type="taxonomic scope" value="Eukaryota"/>
</dbReference>
<dbReference type="HOGENOM" id="CLU_001265_30_5_1"/>
<dbReference type="InParanoid" id="Q9SCW7"/>
<dbReference type="OMA" id="AMYGRER"/>
<dbReference type="OrthoDB" id="6612291at2759"/>
<dbReference type="PhylomeDB" id="Q9SCW7"/>
<dbReference type="PRO" id="PR:Q9SCW7"/>
<dbReference type="Proteomes" id="UP000006548">
    <property type="component" value="Chromosome 1"/>
</dbReference>
<dbReference type="ExpressionAtlas" id="Q9SCW7">
    <property type="expression patterns" value="baseline and differential"/>
</dbReference>
<dbReference type="GO" id="GO:0016020">
    <property type="term" value="C:membrane"/>
    <property type="evidence" value="ECO:0007669"/>
    <property type="project" value="UniProtKB-SubCell"/>
</dbReference>
<dbReference type="GO" id="GO:0051119">
    <property type="term" value="F:sugar transmembrane transporter activity"/>
    <property type="evidence" value="ECO:0007669"/>
    <property type="project" value="InterPro"/>
</dbReference>
<dbReference type="CDD" id="cd17358">
    <property type="entry name" value="MFS_GLUT6_8_Class3_like"/>
    <property type="match status" value="1"/>
</dbReference>
<dbReference type="FunFam" id="1.20.1250.20:FF:000043">
    <property type="entry name" value="sugar transporter ERD6-like 6"/>
    <property type="match status" value="1"/>
</dbReference>
<dbReference type="Gene3D" id="1.20.1250.20">
    <property type="entry name" value="MFS general substrate transporter like domains"/>
    <property type="match status" value="1"/>
</dbReference>
<dbReference type="InterPro" id="IPR020846">
    <property type="entry name" value="MFS_dom"/>
</dbReference>
<dbReference type="InterPro" id="IPR044775">
    <property type="entry name" value="MFS_ERD6/Tret1-like"/>
</dbReference>
<dbReference type="InterPro" id="IPR005828">
    <property type="entry name" value="MFS_sugar_transport-like"/>
</dbReference>
<dbReference type="InterPro" id="IPR036259">
    <property type="entry name" value="MFS_trans_sf"/>
</dbReference>
<dbReference type="InterPro" id="IPR050549">
    <property type="entry name" value="MFS_Trehalose_Transporter"/>
</dbReference>
<dbReference type="InterPro" id="IPR003663">
    <property type="entry name" value="Sugar/inositol_transpt"/>
</dbReference>
<dbReference type="InterPro" id="IPR005829">
    <property type="entry name" value="Sugar_transporter_CS"/>
</dbReference>
<dbReference type="NCBIfam" id="TIGR00879">
    <property type="entry name" value="SP"/>
    <property type="match status" value="1"/>
</dbReference>
<dbReference type="PANTHER" id="PTHR48021">
    <property type="match status" value="1"/>
</dbReference>
<dbReference type="PANTHER" id="PTHR48021:SF93">
    <property type="entry name" value="SUGAR TRANSPORTER ERD6-LIKE 1-RELATED"/>
    <property type="match status" value="1"/>
</dbReference>
<dbReference type="Pfam" id="PF00083">
    <property type="entry name" value="Sugar_tr"/>
    <property type="match status" value="1"/>
</dbReference>
<dbReference type="PRINTS" id="PR00171">
    <property type="entry name" value="SUGRTRNSPORT"/>
</dbReference>
<dbReference type="SUPFAM" id="SSF103473">
    <property type="entry name" value="MFS general substrate transporter"/>
    <property type="match status" value="1"/>
</dbReference>
<dbReference type="PROSITE" id="PS50850">
    <property type="entry name" value="MFS"/>
    <property type="match status" value="1"/>
</dbReference>
<dbReference type="PROSITE" id="PS00217">
    <property type="entry name" value="SUGAR_TRANSPORT_2"/>
    <property type="match status" value="1"/>
</dbReference>
<protein>
    <recommendedName>
        <fullName>Sugar transporter ERD6-like 1</fullName>
    </recommendedName>
    <alternativeName>
        <fullName>Sugar transporter-like protein 4</fullName>
    </alternativeName>
</protein>
<organism>
    <name type="scientific">Arabidopsis thaliana</name>
    <name type="common">Mouse-ear cress</name>
    <dbReference type="NCBI Taxonomy" id="3702"/>
    <lineage>
        <taxon>Eukaryota</taxon>
        <taxon>Viridiplantae</taxon>
        <taxon>Streptophyta</taxon>
        <taxon>Embryophyta</taxon>
        <taxon>Tracheophyta</taxon>
        <taxon>Spermatophyta</taxon>
        <taxon>Magnoliopsida</taxon>
        <taxon>eudicotyledons</taxon>
        <taxon>Gunneridae</taxon>
        <taxon>Pentapetalae</taxon>
        <taxon>rosids</taxon>
        <taxon>malvids</taxon>
        <taxon>Brassicales</taxon>
        <taxon>Brassicaceae</taxon>
        <taxon>Camelineae</taxon>
        <taxon>Arabidopsis</taxon>
    </lineage>
</organism>
<sequence>MESGSMKTPLVNNQEEARSSSSITCGLLLSTSVAVTGSFVYGCAMSYSSPAQSKIMEELGLSVADYSFFTSVMTLGGMITAAFSGKIAAVIGRRQTMWIADVFCIFGWLAVAFAHDKMLLNIGRGFLGFGVGLISYVVPVYIAEITPKAFRGGFSFSNQLLQSFGISLMFFTGNFFHWRTLALLSAIPCGIQMICLFFIPESPRWLAMYGRERELEVTLKRLRGENGDILEEAAEIRETVETSRRESRSGLKDLFNMKNAHPLIIGLGLMLLQQFCGSSAISAYAARIFDTAGFPSDIGTSILAVILVPQSIIVMFAVDRCGRRPLLMSSSIGLCICSFLIGLSYYLQNHGDFQEFCSPILIVGLVGYVLSFGIGLGGLPWVIMSEVFPVNVKITAGSLVTVSNWFFSWIIIFSFNFMMQWSAFGTYFIFAGVSLMSFVFVWTLVPETKGRTLEDIQQSLGQLS</sequence>
<feature type="chain" id="PRO_0000259850" description="Sugar transporter ERD6-like 1">
    <location>
        <begin position="1"/>
        <end position="464"/>
    </location>
</feature>
<feature type="transmembrane region" description="Helical; Name=1" evidence="2">
    <location>
        <begin position="23"/>
        <end position="43"/>
    </location>
</feature>
<feature type="transmembrane region" description="Helical; Name=2" evidence="2">
    <location>
        <begin position="72"/>
        <end position="92"/>
    </location>
</feature>
<feature type="transmembrane region" description="Helical; Name=3" evidence="2">
    <location>
        <begin position="95"/>
        <end position="115"/>
    </location>
</feature>
<feature type="transmembrane region" description="Helical; Name=4" evidence="2">
    <location>
        <begin position="125"/>
        <end position="145"/>
    </location>
</feature>
<feature type="transmembrane region" description="Helical; Name=5" evidence="2">
    <location>
        <begin position="156"/>
        <end position="176"/>
    </location>
</feature>
<feature type="transmembrane region" description="Helical; Name=6" evidence="2">
    <location>
        <begin position="180"/>
        <end position="200"/>
    </location>
</feature>
<feature type="transmembrane region" description="Helical; Name=7" evidence="2">
    <location>
        <begin position="263"/>
        <end position="283"/>
    </location>
</feature>
<feature type="transmembrane region" description="Helical; Name=8" evidence="2">
    <location>
        <begin position="298"/>
        <end position="318"/>
    </location>
</feature>
<feature type="transmembrane region" description="Helical; Name=9" evidence="2">
    <location>
        <begin position="326"/>
        <end position="346"/>
    </location>
</feature>
<feature type="transmembrane region" description="Helical; Name=10" evidence="2">
    <location>
        <begin position="359"/>
        <end position="379"/>
    </location>
</feature>
<feature type="transmembrane region" description="Helical; Name=11" evidence="2">
    <location>
        <begin position="399"/>
        <end position="419"/>
    </location>
</feature>
<feature type="transmembrane region" description="Helical; Name=12" evidence="2">
    <location>
        <begin position="424"/>
        <end position="444"/>
    </location>
</feature>
<feature type="sequence conflict" description="In Ref. 3; CAB64735." evidence="3" ref="3">
    <original>TLG</original>
    <variation>PLE</variation>
    <location>
        <begin position="74"/>
        <end position="76"/>
    </location>
</feature>
<feature type="sequence conflict" description="In Ref. 3; CAB64735." evidence="3" ref="3">
    <original>D</original>
    <variation>N</variation>
    <location>
        <position position="101"/>
    </location>
</feature>